<name>VF145_ASFWA</name>
<organism>
    <name type="scientific">African swine fever virus (isolate Warthog/Namibia/Wart80/1980)</name>
    <name type="common">ASFV</name>
    <dbReference type="NCBI Taxonomy" id="561444"/>
    <lineage>
        <taxon>Viruses</taxon>
        <taxon>Varidnaviria</taxon>
        <taxon>Bamfordvirae</taxon>
        <taxon>Nucleocytoviricota</taxon>
        <taxon>Pokkesviricetes</taxon>
        <taxon>Asfuvirales</taxon>
        <taxon>Asfarviridae</taxon>
        <taxon>Asfivirus</taxon>
        <taxon>African swine fever virus</taxon>
    </lineage>
</organism>
<gene>
    <name type="ordered locus">War-061</name>
</gene>
<accession>P0CA51</accession>
<reference key="1">
    <citation type="submission" date="2003-03" db="EMBL/GenBank/DDBJ databases">
        <title>African swine fever virus genomes.</title>
        <authorList>
            <person name="Kutish G.F."/>
            <person name="Rock D.L."/>
        </authorList>
    </citation>
    <scope>NUCLEOTIDE SEQUENCE [LARGE SCALE GENOMIC DNA]</scope>
</reference>
<feature type="chain" id="PRO_0000373523" description="Uncharacterized protein K145R">
    <location>
        <begin position="1"/>
        <end position="145"/>
    </location>
</feature>
<evidence type="ECO:0000250" key="1">
    <source>
        <dbReference type="UniProtKB" id="Q07385"/>
    </source>
</evidence>
<evidence type="ECO:0000305" key="2"/>
<comment type="subcellular location">
    <subcellularLocation>
        <location evidence="1">Virion</location>
    </subcellularLocation>
</comment>
<comment type="induction">
    <text evidence="2">Expressed in the late phase of the viral replicative cycle.</text>
</comment>
<comment type="similarity">
    <text evidence="2">Belongs to the asfivirus K145R family.</text>
</comment>
<proteinExistence type="inferred from homology"/>
<dbReference type="EMBL" id="AY261366">
    <property type="status" value="NOT_ANNOTATED_CDS"/>
    <property type="molecule type" value="Genomic_DNA"/>
</dbReference>
<dbReference type="SMR" id="P0CA51"/>
<dbReference type="Proteomes" id="UP000000858">
    <property type="component" value="Segment"/>
</dbReference>
<dbReference type="GO" id="GO:0044423">
    <property type="term" value="C:virion component"/>
    <property type="evidence" value="ECO:0007669"/>
    <property type="project" value="UniProtKB-KW"/>
</dbReference>
<keyword id="KW-0426">Late protein</keyword>
<keyword id="KW-0946">Virion</keyword>
<sequence length="145" mass="17193">MDHYLKKLQDIYTKLEGHPFLFSPSKTNEKEFITLLNQALASTQLYRSIQQLFLTMYKLDPIGFINYIKTSKQEYLCLLINPKLVTKFLKITSFKIYINFRLKTFYISPNKYNNFYTAPSEEKTNHLLKEEKTWAKIVEEGGEES</sequence>
<organismHost>
    <name type="scientific">Ornithodoros</name>
    <name type="common">relapsing fever ticks</name>
    <dbReference type="NCBI Taxonomy" id="6937"/>
</organismHost>
<organismHost>
    <name type="scientific">Phacochoerus aethiopicus</name>
    <name type="common">Warthog</name>
    <dbReference type="NCBI Taxonomy" id="85517"/>
</organismHost>
<organismHost>
    <name type="scientific">Phacochoerus africanus</name>
    <name type="common">Warthog</name>
    <dbReference type="NCBI Taxonomy" id="41426"/>
</organismHost>
<organismHost>
    <name type="scientific">Potamochoerus larvatus</name>
    <name type="common">Bushpig</name>
    <dbReference type="NCBI Taxonomy" id="273792"/>
</organismHost>
<organismHost>
    <name type="scientific">Sus scrofa</name>
    <name type="common">Pig</name>
    <dbReference type="NCBI Taxonomy" id="9823"/>
</organismHost>
<protein>
    <recommendedName>
        <fullName>Uncharacterized protein K145R</fullName>
        <shortName>pK145R</shortName>
    </recommendedName>
</protein>